<evidence type="ECO:0000255" key="1">
    <source>
        <dbReference type="HAMAP-Rule" id="MF_01395"/>
    </source>
</evidence>
<evidence type="ECO:0000255" key="2">
    <source>
        <dbReference type="PROSITE-ProRule" id="PRU01136"/>
    </source>
</evidence>
<name>ACCD_SYNR3</name>
<sequence>MSLLDWFADRRKTAPALRPTPEPDEGDGLWSKCPECGEVVYRKDLIANASVCASCGYHHRIHSEERLRILLDPGSFIPVDGELSPTDPLAFKDRRAYADRLRDSQRQTGLRDAVVCGTGTIEGQGIALAVMDFRFMGGSMGSVVGEKITRLIETATEQQLPVLVVCASGGARMQEGMLSLMQMAKISGALERHRSRKLLYIPLLTHPTTGGVTASFAMLGDLILAEPKALIGFAGRRVIEQTLREKLPDNFQTAEYLQDHGFVDAIIPRTQLRSRLASLLQMHQQPAAVSA</sequence>
<organism>
    <name type="scientific">Synechococcus sp. (strain RCC307)</name>
    <dbReference type="NCBI Taxonomy" id="316278"/>
    <lineage>
        <taxon>Bacteria</taxon>
        <taxon>Bacillati</taxon>
        <taxon>Cyanobacteriota</taxon>
        <taxon>Cyanophyceae</taxon>
        <taxon>Synechococcales</taxon>
        <taxon>Synechococcaceae</taxon>
        <taxon>Synechococcus</taxon>
    </lineage>
</organism>
<proteinExistence type="inferred from homology"/>
<protein>
    <recommendedName>
        <fullName evidence="1">Acetyl-coenzyme A carboxylase carboxyl transferase subunit beta</fullName>
        <shortName evidence="1">ACCase subunit beta</shortName>
        <shortName evidence="1">Acetyl-CoA carboxylase carboxyltransferase subunit beta</shortName>
        <ecNumber evidence="1">2.1.3.15</ecNumber>
    </recommendedName>
</protein>
<accession>A5GSN7</accession>
<feature type="chain" id="PRO_0000359079" description="Acetyl-coenzyme A carboxylase carboxyl transferase subunit beta">
    <location>
        <begin position="1"/>
        <end position="291"/>
    </location>
</feature>
<feature type="domain" description="CoA carboxyltransferase N-terminal" evidence="2">
    <location>
        <begin position="29"/>
        <end position="291"/>
    </location>
</feature>
<feature type="zinc finger region" description="C4-type" evidence="1">
    <location>
        <begin position="33"/>
        <end position="55"/>
    </location>
</feature>
<feature type="binding site" evidence="1">
    <location>
        <position position="33"/>
    </location>
    <ligand>
        <name>Zn(2+)</name>
        <dbReference type="ChEBI" id="CHEBI:29105"/>
    </ligand>
</feature>
<feature type="binding site" evidence="1">
    <location>
        <position position="36"/>
    </location>
    <ligand>
        <name>Zn(2+)</name>
        <dbReference type="ChEBI" id="CHEBI:29105"/>
    </ligand>
</feature>
<feature type="binding site" evidence="1">
    <location>
        <position position="52"/>
    </location>
    <ligand>
        <name>Zn(2+)</name>
        <dbReference type="ChEBI" id="CHEBI:29105"/>
    </ligand>
</feature>
<feature type="binding site" evidence="1">
    <location>
        <position position="55"/>
    </location>
    <ligand>
        <name>Zn(2+)</name>
        <dbReference type="ChEBI" id="CHEBI:29105"/>
    </ligand>
</feature>
<keyword id="KW-0067">ATP-binding</keyword>
<keyword id="KW-0963">Cytoplasm</keyword>
<keyword id="KW-0275">Fatty acid biosynthesis</keyword>
<keyword id="KW-0276">Fatty acid metabolism</keyword>
<keyword id="KW-0444">Lipid biosynthesis</keyword>
<keyword id="KW-0443">Lipid metabolism</keyword>
<keyword id="KW-0479">Metal-binding</keyword>
<keyword id="KW-0547">Nucleotide-binding</keyword>
<keyword id="KW-1185">Reference proteome</keyword>
<keyword id="KW-0808">Transferase</keyword>
<keyword id="KW-0862">Zinc</keyword>
<keyword id="KW-0863">Zinc-finger</keyword>
<dbReference type="EC" id="2.1.3.15" evidence="1"/>
<dbReference type="EMBL" id="CT978603">
    <property type="protein sequence ID" value="CAK27896.1"/>
    <property type="molecule type" value="Genomic_DNA"/>
</dbReference>
<dbReference type="SMR" id="A5GSN7"/>
<dbReference type="STRING" id="316278.SynRCC307_0993"/>
<dbReference type="KEGG" id="syr:SynRCC307_0993"/>
<dbReference type="eggNOG" id="COG0777">
    <property type="taxonomic scope" value="Bacteria"/>
</dbReference>
<dbReference type="HOGENOM" id="CLU_015486_1_1_3"/>
<dbReference type="OrthoDB" id="9772975at2"/>
<dbReference type="UniPathway" id="UPA00655">
    <property type="reaction ID" value="UER00711"/>
</dbReference>
<dbReference type="Proteomes" id="UP000001115">
    <property type="component" value="Chromosome"/>
</dbReference>
<dbReference type="GO" id="GO:0009317">
    <property type="term" value="C:acetyl-CoA carboxylase complex"/>
    <property type="evidence" value="ECO:0007669"/>
    <property type="project" value="InterPro"/>
</dbReference>
<dbReference type="GO" id="GO:0003989">
    <property type="term" value="F:acetyl-CoA carboxylase activity"/>
    <property type="evidence" value="ECO:0007669"/>
    <property type="project" value="InterPro"/>
</dbReference>
<dbReference type="GO" id="GO:0005524">
    <property type="term" value="F:ATP binding"/>
    <property type="evidence" value="ECO:0007669"/>
    <property type="project" value="UniProtKB-KW"/>
</dbReference>
<dbReference type="GO" id="GO:0016743">
    <property type="term" value="F:carboxyl- or carbamoyltransferase activity"/>
    <property type="evidence" value="ECO:0007669"/>
    <property type="project" value="UniProtKB-UniRule"/>
</dbReference>
<dbReference type="GO" id="GO:0008270">
    <property type="term" value="F:zinc ion binding"/>
    <property type="evidence" value="ECO:0007669"/>
    <property type="project" value="UniProtKB-UniRule"/>
</dbReference>
<dbReference type="GO" id="GO:0006633">
    <property type="term" value="P:fatty acid biosynthetic process"/>
    <property type="evidence" value="ECO:0007669"/>
    <property type="project" value="UniProtKB-KW"/>
</dbReference>
<dbReference type="GO" id="GO:2001295">
    <property type="term" value="P:malonyl-CoA biosynthetic process"/>
    <property type="evidence" value="ECO:0007669"/>
    <property type="project" value="UniProtKB-UniRule"/>
</dbReference>
<dbReference type="Gene3D" id="3.90.226.10">
    <property type="entry name" value="2-enoyl-CoA Hydratase, Chain A, domain 1"/>
    <property type="match status" value="1"/>
</dbReference>
<dbReference type="HAMAP" id="MF_01395">
    <property type="entry name" value="AcetylCoA_CT_beta"/>
    <property type="match status" value="1"/>
</dbReference>
<dbReference type="InterPro" id="IPR034733">
    <property type="entry name" value="AcCoA_carboxyl_beta"/>
</dbReference>
<dbReference type="InterPro" id="IPR000438">
    <property type="entry name" value="Acetyl_CoA_COase_Trfase_b_su"/>
</dbReference>
<dbReference type="InterPro" id="IPR029045">
    <property type="entry name" value="ClpP/crotonase-like_dom_sf"/>
</dbReference>
<dbReference type="InterPro" id="IPR011762">
    <property type="entry name" value="COA_CT_N"/>
</dbReference>
<dbReference type="InterPro" id="IPR041010">
    <property type="entry name" value="Znf-ACC"/>
</dbReference>
<dbReference type="NCBIfam" id="TIGR00515">
    <property type="entry name" value="accD"/>
    <property type="match status" value="1"/>
</dbReference>
<dbReference type="PANTHER" id="PTHR42995">
    <property type="entry name" value="ACETYL-COENZYME A CARBOXYLASE CARBOXYL TRANSFERASE SUBUNIT BETA, CHLOROPLASTIC"/>
    <property type="match status" value="1"/>
</dbReference>
<dbReference type="PANTHER" id="PTHR42995:SF5">
    <property type="entry name" value="ACETYL-COENZYME A CARBOXYLASE CARBOXYL TRANSFERASE SUBUNIT BETA, CHLOROPLASTIC"/>
    <property type="match status" value="1"/>
</dbReference>
<dbReference type="Pfam" id="PF01039">
    <property type="entry name" value="Carboxyl_trans"/>
    <property type="match status" value="1"/>
</dbReference>
<dbReference type="Pfam" id="PF17848">
    <property type="entry name" value="Zn_ribbon_ACC"/>
    <property type="match status" value="1"/>
</dbReference>
<dbReference type="PRINTS" id="PR01070">
    <property type="entry name" value="ACCCTRFRASEB"/>
</dbReference>
<dbReference type="SUPFAM" id="SSF52096">
    <property type="entry name" value="ClpP/crotonase"/>
    <property type="match status" value="1"/>
</dbReference>
<dbReference type="PROSITE" id="PS50980">
    <property type="entry name" value="COA_CT_NTER"/>
    <property type="match status" value="1"/>
</dbReference>
<comment type="function">
    <text evidence="1">Component of the acetyl coenzyme A carboxylase (ACC) complex. Biotin carboxylase (BC) catalyzes the carboxylation of biotin on its carrier protein (BCCP) and then the CO(2) group is transferred by the transcarboxylase to acetyl-CoA to form malonyl-CoA.</text>
</comment>
<comment type="catalytic activity">
    <reaction evidence="1">
        <text>N(6)-carboxybiotinyl-L-lysyl-[protein] + acetyl-CoA = N(6)-biotinyl-L-lysyl-[protein] + malonyl-CoA</text>
        <dbReference type="Rhea" id="RHEA:54728"/>
        <dbReference type="Rhea" id="RHEA-COMP:10505"/>
        <dbReference type="Rhea" id="RHEA-COMP:10506"/>
        <dbReference type="ChEBI" id="CHEBI:57288"/>
        <dbReference type="ChEBI" id="CHEBI:57384"/>
        <dbReference type="ChEBI" id="CHEBI:83144"/>
        <dbReference type="ChEBI" id="CHEBI:83145"/>
        <dbReference type="EC" id="2.1.3.15"/>
    </reaction>
</comment>
<comment type="cofactor">
    <cofactor evidence="1">
        <name>Zn(2+)</name>
        <dbReference type="ChEBI" id="CHEBI:29105"/>
    </cofactor>
    <text evidence="1">Binds 1 zinc ion per subunit.</text>
</comment>
<comment type="pathway">
    <text evidence="1">Lipid metabolism; malonyl-CoA biosynthesis; malonyl-CoA from acetyl-CoA: step 1/1.</text>
</comment>
<comment type="subunit">
    <text evidence="1">Acetyl-CoA carboxylase is a heterohexamer composed of biotin carboxyl carrier protein (AccB), biotin carboxylase (AccC) and two subunits each of ACCase subunit alpha (AccA) and ACCase subunit beta (AccD).</text>
</comment>
<comment type="subcellular location">
    <subcellularLocation>
        <location evidence="1">Cytoplasm</location>
    </subcellularLocation>
</comment>
<comment type="similarity">
    <text evidence="1">Belongs to the AccD/PCCB family.</text>
</comment>
<reference key="1">
    <citation type="submission" date="2006-05" db="EMBL/GenBank/DDBJ databases">
        <authorList>
            <consortium name="Genoscope"/>
        </authorList>
    </citation>
    <scope>NUCLEOTIDE SEQUENCE [LARGE SCALE GENOMIC DNA]</scope>
    <source>
        <strain>RCC307</strain>
    </source>
</reference>
<gene>
    <name evidence="1" type="primary">accD</name>
    <name type="ordered locus">SynRCC307_0993</name>
</gene>